<gene>
    <name type="primary">MT3A</name>
    <name type="synonym">ML2</name>
    <name type="ordered locus">Os01g0200700</name>
    <name type="ordered locus">LOC_Os01g10400</name>
    <name type="ORF">B1015E06.18</name>
    <name type="ORF">OsJ_00763</name>
</gene>
<keyword id="KW-0479">Metal-binding</keyword>
<keyword id="KW-0480">Metal-thiolate cluster</keyword>
<keyword id="KW-1185">Reference proteome</keyword>
<proteinExistence type="evidence at transcript level"/>
<evidence type="ECO:0000269" key="1">
    <source>
    </source>
</evidence>
<evidence type="ECO:0000305" key="2"/>
<dbReference type="EMBL" id="EF136378">
    <property type="protein sequence ID" value="ABL74404.1"/>
    <property type="molecule type" value="mRNA"/>
</dbReference>
<dbReference type="EMBL" id="AP003197">
    <property type="protein sequence ID" value="BAB92212.1"/>
    <property type="molecule type" value="Genomic_DNA"/>
</dbReference>
<dbReference type="EMBL" id="AP008207">
    <property type="protein sequence ID" value="BAF04233.1"/>
    <property type="molecule type" value="Genomic_DNA"/>
</dbReference>
<dbReference type="EMBL" id="AP014957">
    <property type="protein sequence ID" value="BAS70905.1"/>
    <property type="molecule type" value="Genomic_DNA"/>
</dbReference>
<dbReference type="EMBL" id="CM000138">
    <property type="protein sequence ID" value="EAZ10922.1"/>
    <property type="molecule type" value="Genomic_DNA"/>
</dbReference>
<dbReference type="FunCoup" id="A1YTM8">
    <property type="interactions" value="302"/>
</dbReference>
<dbReference type="STRING" id="39947.A1YTM8"/>
<dbReference type="PaxDb" id="39947-A1YTM8"/>
<dbReference type="EnsemblPlants" id="Os01t0200700-01">
    <property type="protein sequence ID" value="Os01t0200700-01"/>
    <property type="gene ID" value="Os01g0200700"/>
</dbReference>
<dbReference type="Gramene" id="Os01t0200700-01">
    <property type="protein sequence ID" value="Os01t0200700-01"/>
    <property type="gene ID" value="Os01g0200700"/>
</dbReference>
<dbReference type="KEGG" id="dosa:Os01g0200700"/>
<dbReference type="eggNOG" id="ENOG502S7B3">
    <property type="taxonomic scope" value="Eukaryota"/>
</dbReference>
<dbReference type="HOGENOM" id="CLU_204176_0_0_1"/>
<dbReference type="InParanoid" id="A1YTM8"/>
<dbReference type="OMA" id="ASCTCVN"/>
<dbReference type="Proteomes" id="UP000000763">
    <property type="component" value="Chromosome 1"/>
</dbReference>
<dbReference type="Proteomes" id="UP000007752">
    <property type="component" value="Chromosome 1"/>
</dbReference>
<dbReference type="Proteomes" id="UP000059680">
    <property type="component" value="Chromosome 1"/>
</dbReference>
<dbReference type="ExpressionAtlas" id="A1YTM8">
    <property type="expression patterns" value="baseline and differential"/>
</dbReference>
<dbReference type="GO" id="GO:0005507">
    <property type="term" value="F:copper ion binding"/>
    <property type="evidence" value="ECO:0000318"/>
    <property type="project" value="GO_Central"/>
</dbReference>
<dbReference type="GO" id="GO:0008270">
    <property type="term" value="F:zinc ion binding"/>
    <property type="evidence" value="ECO:0000318"/>
    <property type="project" value="GO_Central"/>
</dbReference>
<dbReference type="GO" id="GO:0006878">
    <property type="term" value="P:intracellular copper ion homeostasis"/>
    <property type="evidence" value="ECO:0007669"/>
    <property type="project" value="InterPro"/>
</dbReference>
<dbReference type="InterPro" id="IPR044671">
    <property type="entry name" value="MT3"/>
</dbReference>
<dbReference type="PANTHER" id="PTHR33357">
    <property type="entry name" value="METALLOTHIONEIN-LIKE PROTEIN 3"/>
    <property type="match status" value="1"/>
</dbReference>
<dbReference type="PANTHER" id="PTHR33357:SF3">
    <property type="entry name" value="METALLOTHIONEIN-LIKE PROTEIN 3"/>
    <property type="match status" value="1"/>
</dbReference>
<sequence>MSDKCGNCDCADKSQCVKKGTSYGVVIVEAEKSHFEEVAAGEENGGCKCGTSCSCTDCKCGK</sequence>
<protein>
    <recommendedName>
        <fullName>Metallothionein-like protein 3A</fullName>
    </recommendedName>
    <alternativeName>
        <fullName>Class I metallothionein-like protein 3A</fullName>
    </alternativeName>
    <alternativeName>
        <fullName>OsMT-I-3a</fullName>
        <shortName>OsMT3</shortName>
        <shortName>OsMT3a</shortName>
    </alternativeName>
</protein>
<feature type="chain" id="PRO_0000263057" description="Metallothionein-like protein 3A">
    <location>
        <begin position="1"/>
        <end position="62"/>
    </location>
</feature>
<accession>A1YTM8</accession>
<accession>O04185</accession>
<accession>Q7F6G0</accession>
<reference key="1">
    <citation type="submission" date="2006-11" db="EMBL/GenBank/DDBJ databases">
        <title>Characterization and expression of a rice type 3 metallothionein gene, which are differentially expressed under different nitrogen forms.</title>
        <authorList>
            <person name="Zhu G."/>
            <person name="Peng X."/>
        </authorList>
    </citation>
    <scope>NUCLEOTIDE SEQUENCE [MRNA]</scope>
</reference>
<reference key="2">
    <citation type="journal article" date="2002" name="Nature">
        <title>The genome sequence and structure of rice chromosome 1.</title>
        <authorList>
            <person name="Sasaki T."/>
            <person name="Matsumoto T."/>
            <person name="Yamamoto K."/>
            <person name="Sakata K."/>
            <person name="Baba T."/>
            <person name="Katayose Y."/>
            <person name="Wu J."/>
            <person name="Niimura Y."/>
            <person name="Cheng Z."/>
            <person name="Nagamura Y."/>
            <person name="Antonio B.A."/>
            <person name="Kanamori H."/>
            <person name="Hosokawa S."/>
            <person name="Masukawa M."/>
            <person name="Arikawa K."/>
            <person name="Chiden Y."/>
            <person name="Hayashi M."/>
            <person name="Okamoto M."/>
            <person name="Ando T."/>
            <person name="Aoki H."/>
            <person name="Arita K."/>
            <person name="Hamada M."/>
            <person name="Harada C."/>
            <person name="Hijishita S."/>
            <person name="Honda M."/>
            <person name="Ichikawa Y."/>
            <person name="Idonuma A."/>
            <person name="Iijima M."/>
            <person name="Ikeda M."/>
            <person name="Ikeno M."/>
            <person name="Ito S."/>
            <person name="Ito T."/>
            <person name="Ito Y."/>
            <person name="Ito Y."/>
            <person name="Iwabuchi A."/>
            <person name="Kamiya K."/>
            <person name="Karasawa W."/>
            <person name="Katagiri S."/>
            <person name="Kikuta A."/>
            <person name="Kobayashi N."/>
            <person name="Kono I."/>
            <person name="Machita K."/>
            <person name="Maehara T."/>
            <person name="Mizuno H."/>
            <person name="Mizubayashi T."/>
            <person name="Mukai Y."/>
            <person name="Nagasaki H."/>
            <person name="Nakashima M."/>
            <person name="Nakama Y."/>
            <person name="Nakamichi Y."/>
            <person name="Nakamura M."/>
            <person name="Namiki N."/>
            <person name="Negishi M."/>
            <person name="Ohta I."/>
            <person name="Ono N."/>
            <person name="Saji S."/>
            <person name="Sakai K."/>
            <person name="Shibata M."/>
            <person name="Shimokawa T."/>
            <person name="Shomura A."/>
            <person name="Song J."/>
            <person name="Takazaki Y."/>
            <person name="Terasawa K."/>
            <person name="Tsuji K."/>
            <person name="Waki K."/>
            <person name="Yamagata H."/>
            <person name="Yamane H."/>
            <person name="Yoshiki S."/>
            <person name="Yoshihara R."/>
            <person name="Yukawa K."/>
            <person name="Zhong H."/>
            <person name="Iwama H."/>
            <person name="Endo T."/>
            <person name="Ito H."/>
            <person name="Hahn J.H."/>
            <person name="Kim H.-I."/>
            <person name="Eun M.-Y."/>
            <person name="Yano M."/>
            <person name="Jiang J."/>
            <person name="Gojobori T."/>
        </authorList>
    </citation>
    <scope>NUCLEOTIDE SEQUENCE [LARGE SCALE GENOMIC DNA]</scope>
    <source>
        <strain>cv. Nipponbare</strain>
    </source>
</reference>
<reference key="3">
    <citation type="journal article" date="2005" name="Nature">
        <title>The map-based sequence of the rice genome.</title>
        <authorList>
            <consortium name="International rice genome sequencing project (IRGSP)"/>
        </authorList>
    </citation>
    <scope>NUCLEOTIDE SEQUENCE [LARGE SCALE GENOMIC DNA]</scope>
    <source>
        <strain>cv. Nipponbare</strain>
    </source>
</reference>
<reference key="4">
    <citation type="journal article" date="2008" name="Nucleic Acids Res.">
        <title>The rice annotation project database (RAP-DB): 2008 update.</title>
        <authorList>
            <consortium name="The rice annotation project (RAP)"/>
        </authorList>
    </citation>
    <scope>GENOME REANNOTATION</scope>
    <source>
        <strain>cv. Nipponbare</strain>
    </source>
</reference>
<reference key="5">
    <citation type="journal article" date="2013" name="Rice">
        <title>Improvement of the Oryza sativa Nipponbare reference genome using next generation sequence and optical map data.</title>
        <authorList>
            <person name="Kawahara Y."/>
            <person name="de la Bastide M."/>
            <person name="Hamilton J.P."/>
            <person name="Kanamori H."/>
            <person name="McCombie W.R."/>
            <person name="Ouyang S."/>
            <person name="Schwartz D.C."/>
            <person name="Tanaka T."/>
            <person name="Wu J."/>
            <person name="Zhou S."/>
            <person name="Childs K.L."/>
            <person name="Davidson R.M."/>
            <person name="Lin H."/>
            <person name="Quesada-Ocampo L."/>
            <person name="Vaillancourt B."/>
            <person name="Sakai H."/>
            <person name="Lee S.S."/>
            <person name="Kim J."/>
            <person name="Numa H."/>
            <person name="Itoh T."/>
            <person name="Buell C.R."/>
            <person name="Matsumoto T."/>
        </authorList>
    </citation>
    <scope>GENOME REANNOTATION</scope>
    <source>
        <strain>cv. Nipponbare</strain>
    </source>
</reference>
<reference key="6">
    <citation type="journal article" date="2005" name="PLoS Biol.">
        <title>The genomes of Oryza sativa: a history of duplications.</title>
        <authorList>
            <person name="Yu J."/>
            <person name="Wang J."/>
            <person name="Lin W."/>
            <person name="Li S."/>
            <person name="Li H."/>
            <person name="Zhou J."/>
            <person name="Ni P."/>
            <person name="Dong W."/>
            <person name="Hu S."/>
            <person name="Zeng C."/>
            <person name="Zhang J."/>
            <person name="Zhang Y."/>
            <person name="Li R."/>
            <person name="Xu Z."/>
            <person name="Li S."/>
            <person name="Li X."/>
            <person name="Zheng H."/>
            <person name="Cong L."/>
            <person name="Lin L."/>
            <person name="Yin J."/>
            <person name="Geng J."/>
            <person name="Li G."/>
            <person name="Shi J."/>
            <person name="Liu J."/>
            <person name="Lv H."/>
            <person name="Li J."/>
            <person name="Wang J."/>
            <person name="Deng Y."/>
            <person name="Ran L."/>
            <person name="Shi X."/>
            <person name="Wang X."/>
            <person name="Wu Q."/>
            <person name="Li C."/>
            <person name="Ren X."/>
            <person name="Wang J."/>
            <person name="Wang X."/>
            <person name="Li D."/>
            <person name="Liu D."/>
            <person name="Zhang X."/>
            <person name="Ji Z."/>
            <person name="Zhao W."/>
            <person name="Sun Y."/>
            <person name="Zhang Z."/>
            <person name="Bao J."/>
            <person name="Han Y."/>
            <person name="Dong L."/>
            <person name="Ji J."/>
            <person name="Chen P."/>
            <person name="Wu S."/>
            <person name="Liu J."/>
            <person name="Xiao Y."/>
            <person name="Bu D."/>
            <person name="Tan J."/>
            <person name="Yang L."/>
            <person name="Ye C."/>
            <person name="Zhang J."/>
            <person name="Xu J."/>
            <person name="Zhou Y."/>
            <person name="Yu Y."/>
            <person name="Zhang B."/>
            <person name="Zhuang S."/>
            <person name="Wei H."/>
            <person name="Liu B."/>
            <person name="Lei M."/>
            <person name="Yu H."/>
            <person name="Li Y."/>
            <person name="Xu H."/>
            <person name="Wei S."/>
            <person name="He X."/>
            <person name="Fang L."/>
            <person name="Zhang Z."/>
            <person name="Zhang Y."/>
            <person name="Huang X."/>
            <person name="Su Z."/>
            <person name="Tong W."/>
            <person name="Li J."/>
            <person name="Tong Z."/>
            <person name="Li S."/>
            <person name="Ye J."/>
            <person name="Wang L."/>
            <person name="Fang L."/>
            <person name="Lei T."/>
            <person name="Chen C.-S."/>
            <person name="Chen H.-C."/>
            <person name="Xu Z."/>
            <person name="Li H."/>
            <person name="Huang H."/>
            <person name="Zhang F."/>
            <person name="Xu H."/>
            <person name="Li N."/>
            <person name="Zhao C."/>
            <person name="Li S."/>
            <person name="Dong L."/>
            <person name="Huang Y."/>
            <person name="Li L."/>
            <person name="Xi Y."/>
            <person name="Qi Q."/>
            <person name="Li W."/>
            <person name="Zhang B."/>
            <person name="Hu W."/>
            <person name="Zhang Y."/>
            <person name="Tian X."/>
            <person name="Jiao Y."/>
            <person name="Liang X."/>
            <person name="Jin J."/>
            <person name="Gao L."/>
            <person name="Zheng W."/>
            <person name="Hao B."/>
            <person name="Liu S.-M."/>
            <person name="Wang W."/>
            <person name="Yuan L."/>
            <person name="Cao M."/>
            <person name="McDermott J."/>
            <person name="Samudrala R."/>
            <person name="Wang J."/>
            <person name="Wong G.K.-S."/>
            <person name="Yang H."/>
        </authorList>
    </citation>
    <scope>NUCLEOTIDE SEQUENCE [LARGE SCALE GENOMIC DNA]</scope>
    <source>
        <strain>cv. Nipponbare</strain>
    </source>
</reference>
<reference key="7">
    <citation type="journal article" date="2006" name="J. Biochem. Mol. Biol.">
        <title>Molecular analyses of the metallothionein gene family in rice (Oryza sativa L.).</title>
        <authorList>
            <person name="Zhou G."/>
            <person name="Xu Y."/>
            <person name="Li J."/>
            <person name="Yang L."/>
            <person name="Liu J.-Y."/>
        </authorList>
    </citation>
    <scope>GENE FAMILY</scope>
    <scope>TISSUE SPECIFICITY</scope>
</reference>
<comment type="function">
    <text evidence="2">Metallothioneins have a high content of cysteine residues that bind various heavy metals.</text>
</comment>
<comment type="tissue specificity">
    <text evidence="1">Expressed in roots.</text>
</comment>
<comment type="similarity">
    <text evidence="2">Belongs to the metallothionein superfamily. Type 15 family.</text>
</comment>
<organism>
    <name type="scientific">Oryza sativa subsp. japonica</name>
    <name type="common">Rice</name>
    <dbReference type="NCBI Taxonomy" id="39947"/>
    <lineage>
        <taxon>Eukaryota</taxon>
        <taxon>Viridiplantae</taxon>
        <taxon>Streptophyta</taxon>
        <taxon>Embryophyta</taxon>
        <taxon>Tracheophyta</taxon>
        <taxon>Spermatophyta</taxon>
        <taxon>Magnoliopsida</taxon>
        <taxon>Liliopsida</taxon>
        <taxon>Poales</taxon>
        <taxon>Poaceae</taxon>
        <taxon>BOP clade</taxon>
        <taxon>Oryzoideae</taxon>
        <taxon>Oryzeae</taxon>
        <taxon>Oryzinae</taxon>
        <taxon>Oryza</taxon>
        <taxon>Oryza sativa</taxon>
    </lineage>
</organism>
<name>MT3A_ORYSJ</name>